<reference key="1">
    <citation type="journal article" date="2002" name="Proc. Natl. Acad. Sci. U.S.A.">
        <title>Genome sequence of a serotype M3 strain of group A Streptococcus: phage-encoded toxins, the high-virulence phenotype, and clone emergence.</title>
        <authorList>
            <person name="Beres S.B."/>
            <person name="Sylva G.L."/>
            <person name="Barbian K.D."/>
            <person name="Lei B."/>
            <person name="Hoff J.S."/>
            <person name="Mammarella N.D."/>
            <person name="Liu M.-Y."/>
            <person name="Smoot J.C."/>
            <person name="Porcella S.F."/>
            <person name="Parkins L.D."/>
            <person name="Campbell D.S."/>
            <person name="Smith T.M."/>
            <person name="McCormick J.K."/>
            <person name="Leung D.Y.M."/>
            <person name="Schlievert P.M."/>
            <person name="Musser J.M."/>
        </authorList>
    </citation>
    <scope>NUCLEOTIDE SEQUENCE [LARGE SCALE GENOMIC DNA]</scope>
    <source>
        <strain>ATCC BAA-595 / MGAS315</strain>
    </source>
</reference>
<gene>
    <name evidence="1" type="primary">truB</name>
    <name type="ordered locus">SpyM3_0887</name>
</gene>
<comment type="function">
    <text evidence="1">Responsible for synthesis of pseudouridine from uracil-55 in the psi GC loop of transfer RNAs.</text>
</comment>
<comment type="catalytic activity">
    <reaction evidence="1">
        <text>uridine(55) in tRNA = pseudouridine(55) in tRNA</text>
        <dbReference type="Rhea" id="RHEA:42532"/>
        <dbReference type="Rhea" id="RHEA-COMP:10101"/>
        <dbReference type="Rhea" id="RHEA-COMP:10102"/>
        <dbReference type="ChEBI" id="CHEBI:65314"/>
        <dbReference type="ChEBI" id="CHEBI:65315"/>
        <dbReference type="EC" id="5.4.99.25"/>
    </reaction>
</comment>
<comment type="similarity">
    <text evidence="1">Belongs to the pseudouridine synthase TruB family. Type 1 subfamily.</text>
</comment>
<comment type="sequence caution" evidence="2">
    <conflict type="erroneous initiation">
        <sequence resource="EMBL-CDS" id="AAM79494"/>
    </conflict>
</comment>
<sequence length="294" mass="32315">MINGIINLKKEAGMTSHDAVFKLRKLLQEKKIGHGGTLDPDVVGVLPIAVGKATRVIEYMTEAGKVYEGQVTLGYSTTTEDASGEVVARSSLPAVLTEELVDQTMTTFLGKITQTPPMYSAVKVNGRKLYEYARAGESVERPRREVTISLFERTSPLNFTEDGLCRFSFKVACGKGTYVRTLAVDLGRALGVESHMSFLQRSASAGLTLETAYTLGEIADMVSKQEMSFLLPIEYGVADLPKMVIDDTELTEISFGRRLSLPSQEPLLAAFHGEKVIAILEKRDQEYKPKKVLI</sequence>
<keyword id="KW-0413">Isomerase</keyword>
<keyword id="KW-0819">tRNA processing</keyword>
<dbReference type="EC" id="5.4.99.25" evidence="1"/>
<dbReference type="EMBL" id="AE014074">
    <property type="protein sequence ID" value="AAM79494.1"/>
    <property type="status" value="ALT_INIT"/>
    <property type="molecule type" value="Genomic_DNA"/>
</dbReference>
<dbReference type="RefSeq" id="WP_011054534.1">
    <property type="nucleotide sequence ID" value="NC_004070.1"/>
</dbReference>
<dbReference type="SMR" id="P0DD48"/>
<dbReference type="KEGG" id="spg:SpyM3_0887"/>
<dbReference type="HOGENOM" id="CLU_032087_0_1_9"/>
<dbReference type="Proteomes" id="UP000000564">
    <property type="component" value="Chromosome"/>
</dbReference>
<dbReference type="GO" id="GO:0003723">
    <property type="term" value="F:RNA binding"/>
    <property type="evidence" value="ECO:0007669"/>
    <property type="project" value="InterPro"/>
</dbReference>
<dbReference type="GO" id="GO:0160148">
    <property type="term" value="F:tRNA pseudouridine(55) synthase activity"/>
    <property type="evidence" value="ECO:0007669"/>
    <property type="project" value="UniProtKB-EC"/>
</dbReference>
<dbReference type="GO" id="GO:1990481">
    <property type="term" value="P:mRNA pseudouridine synthesis"/>
    <property type="evidence" value="ECO:0007669"/>
    <property type="project" value="TreeGrafter"/>
</dbReference>
<dbReference type="GO" id="GO:0031119">
    <property type="term" value="P:tRNA pseudouridine synthesis"/>
    <property type="evidence" value="ECO:0007669"/>
    <property type="project" value="UniProtKB-UniRule"/>
</dbReference>
<dbReference type="CDD" id="cd02573">
    <property type="entry name" value="PseudoU_synth_EcTruB"/>
    <property type="match status" value="1"/>
</dbReference>
<dbReference type="FunFam" id="3.30.2350.10:FF:000011">
    <property type="entry name" value="tRNA pseudouridine synthase B"/>
    <property type="match status" value="1"/>
</dbReference>
<dbReference type="Gene3D" id="3.30.2350.10">
    <property type="entry name" value="Pseudouridine synthase"/>
    <property type="match status" value="1"/>
</dbReference>
<dbReference type="HAMAP" id="MF_01080">
    <property type="entry name" value="TruB_bact"/>
    <property type="match status" value="1"/>
</dbReference>
<dbReference type="InterPro" id="IPR020103">
    <property type="entry name" value="PsdUridine_synth_cat_dom_sf"/>
</dbReference>
<dbReference type="InterPro" id="IPR002501">
    <property type="entry name" value="PsdUridine_synth_N"/>
</dbReference>
<dbReference type="InterPro" id="IPR014780">
    <property type="entry name" value="tRNA_psdUridine_synth_TruB"/>
</dbReference>
<dbReference type="InterPro" id="IPR032819">
    <property type="entry name" value="TruB_C"/>
</dbReference>
<dbReference type="NCBIfam" id="TIGR00431">
    <property type="entry name" value="TruB"/>
    <property type="match status" value="1"/>
</dbReference>
<dbReference type="PANTHER" id="PTHR13767:SF2">
    <property type="entry name" value="PSEUDOURIDYLATE SYNTHASE TRUB1"/>
    <property type="match status" value="1"/>
</dbReference>
<dbReference type="PANTHER" id="PTHR13767">
    <property type="entry name" value="TRNA-PSEUDOURIDINE SYNTHASE"/>
    <property type="match status" value="1"/>
</dbReference>
<dbReference type="Pfam" id="PF16198">
    <property type="entry name" value="TruB_C_2"/>
    <property type="match status" value="1"/>
</dbReference>
<dbReference type="Pfam" id="PF01509">
    <property type="entry name" value="TruB_N"/>
    <property type="match status" value="1"/>
</dbReference>
<dbReference type="SUPFAM" id="SSF55120">
    <property type="entry name" value="Pseudouridine synthase"/>
    <property type="match status" value="1"/>
</dbReference>
<name>TRUB_STRP3</name>
<organism>
    <name type="scientific">Streptococcus pyogenes serotype M3 (strain ATCC BAA-595 / MGAS315)</name>
    <dbReference type="NCBI Taxonomy" id="198466"/>
    <lineage>
        <taxon>Bacteria</taxon>
        <taxon>Bacillati</taxon>
        <taxon>Bacillota</taxon>
        <taxon>Bacilli</taxon>
        <taxon>Lactobacillales</taxon>
        <taxon>Streptococcaceae</taxon>
        <taxon>Streptococcus</taxon>
    </lineage>
</organism>
<protein>
    <recommendedName>
        <fullName evidence="1">tRNA pseudouridine synthase B</fullName>
        <ecNumber evidence="1">5.4.99.25</ecNumber>
    </recommendedName>
    <alternativeName>
        <fullName evidence="1">tRNA pseudouridine(55) synthase</fullName>
        <shortName evidence="1">Psi55 synthase</shortName>
    </alternativeName>
    <alternativeName>
        <fullName evidence="1">tRNA pseudouridylate synthase</fullName>
    </alternativeName>
    <alternativeName>
        <fullName evidence="1">tRNA-uridine isomerase</fullName>
    </alternativeName>
</protein>
<accession>P0DD48</accession>
<accession>Q878P4</accession>
<accession>Q8K7B8</accession>
<evidence type="ECO:0000255" key="1">
    <source>
        <dbReference type="HAMAP-Rule" id="MF_01080"/>
    </source>
</evidence>
<evidence type="ECO:0000305" key="2"/>
<proteinExistence type="inferred from homology"/>
<feature type="chain" id="PRO_0000121918" description="tRNA pseudouridine synthase B">
    <location>
        <begin position="1"/>
        <end position="294"/>
    </location>
</feature>
<feature type="active site" description="Nucleophile" evidence="1">
    <location>
        <position position="39"/>
    </location>
</feature>